<name>6PGD_MOUSE</name>
<organism>
    <name type="scientific">Mus musculus</name>
    <name type="common">Mouse</name>
    <dbReference type="NCBI Taxonomy" id="10090"/>
    <lineage>
        <taxon>Eukaryota</taxon>
        <taxon>Metazoa</taxon>
        <taxon>Chordata</taxon>
        <taxon>Craniata</taxon>
        <taxon>Vertebrata</taxon>
        <taxon>Euteleostomi</taxon>
        <taxon>Mammalia</taxon>
        <taxon>Eutheria</taxon>
        <taxon>Euarchontoglires</taxon>
        <taxon>Glires</taxon>
        <taxon>Rodentia</taxon>
        <taxon>Myomorpha</taxon>
        <taxon>Muroidea</taxon>
        <taxon>Muridae</taxon>
        <taxon>Murinae</taxon>
        <taxon>Mus</taxon>
        <taxon>Mus</taxon>
    </lineage>
</organism>
<protein>
    <recommendedName>
        <fullName>6-phosphogluconate dehydrogenase, decarboxylating</fullName>
        <ecNumber>1.1.1.44</ecNumber>
    </recommendedName>
</protein>
<evidence type="ECO:0000250" key="1"/>
<evidence type="ECO:0000250" key="2">
    <source>
        <dbReference type="UniProtKB" id="P52209"/>
    </source>
</evidence>
<evidence type="ECO:0000305" key="3"/>
<evidence type="ECO:0007744" key="4">
    <source>
    </source>
</evidence>
<evidence type="ECO:0007744" key="5">
    <source>
    </source>
</evidence>
<feature type="chain" id="PRO_0000090064" description="6-phosphogluconate dehydrogenase, decarboxylating">
    <location>
        <begin position="1"/>
        <end position="483"/>
    </location>
</feature>
<feature type="active site" description="Proton acceptor" evidence="1">
    <location>
        <position position="184"/>
    </location>
</feature>
<feature type="active site" description="Proton donor" evidence="1">
    <location>
        <position position="191"/>
    </location>
</feature>
<feature type="binding site" description="in other chain" evidence="1">
    <location>
        <begin position="10"/>
        <end position="15"/>
    </location>
    <ligand>
        <name>NADP(+)</name>
        <dbReference type="ChEBI" id="CHEBI:58349"/>
        <note>ligand shared between dimeric partners</note>
    </ligand>
</feature>
<feature type="binding site" description="in other chain" evidence="1">
    <location>
        <begin position="33"/>
        <end position="35"/>
    </location>
    <ligand>
        <name>NADP(+)</name>
        <dbReference type="ChEBI" id="CHEBI:58349"/>
        <note>ligand shared between dimeric partners</note>
    </ligand>
</feature>
<feature type="binding site" description="in other chain" evidence="1">
    <location>
        <begin position="75"/>
        <end position="77"/>
    </location>
    <ligand>
        <name>NADP(+)</name>
        <dbReference type="ChEBI" id="CHEBI:58349"/>
        <note>ligand shared between dimeric partners</note>
    </ligand>
</feature>
<feature type="binding site" description="in other chain" evidence="1">
    <location>
        <position position="103"/>
    </location>
    <ligand>
        <name>NADP(+)</name>
        <dbReference type="ChEBI" id="CHEBI:58349"/>
        <note>ligand shared between dimeric partners</note>
    </ligand>
</feature>
<feature type="binding site" description="in other chain" evidence="1">
    <location>
        <position position="103"/>
    </location>
    <ligand>
        <name>substrate</name>
        <note>ligand shared between dimeric partners</note>
    </ligand>
</feature>
<feature type="binding site" description="in other chain" evidence="1">
    <location>
        <begin position="129"/>
        <end position="131"/>
    </location>
    <ligand>
        <name>substrate</name>
        <note>ligand shared between dimeric partners</note>
    </ligand>
</feature>
<feature type="binding site" description="in other chain" evidence="1">
    <location>
        <begin position="187"/>
        <end position="188"/>
    </location>
    <ligand>
        <name>substrate</name>
        <note>ligand shared between dimeric partners</note>
    </ligand>
</feature>
<feature type="binding site" description="in other chain" evidence="1">
    <location>
        <position position="192"/>
    </location>
    <ligand>
        <name>substrate</name>
        <note>ligand shared between dimeric partners</note>
    </ligand>
</feature>
<feature type="binding site" description="in other chain" evidence="1">
    <location>
        <position position="261"/>
    </location>
    <ligand>
        <name>substrate</name>
        <note>ligand shared between dimeric partners</note>
    </ligand>
</feature>
<feature type="binding site" description="in other chain" evidence="1">
    <location>
        <position position="288"/>
    </location>
    <ligand>
        <name>substrate</name>
        <note>ligand shared between dimeric partners</note>
    </ligand>
</feature>
<feature type="binding site" evidence="1">
    <location>
        <position position="447"/>
    </location>
    <ligand>
        <name>substrate</name>
        <note>ligand shared between dimeric partners</note>
    </ligand>
</feature>
<feature type="binding site" evidence="1">
    <location>
        <position position="453"/>
    </location>
    <ligand>
        <name>substrate</name>
        <note>ligand shared between dimeric partners</note>
    </ligand>
</feature>
<feature type="binding site" evidence="1">
    <location>
        <begin position="478"/>
        <end position="481"/>
    </location>
    <ligand>
        <name>NADP(+)</name>
        <dbReference type="ChEBI" id="CHEBI:58349"/>
        <note>ligand shared between dimeric partners</note>
    </ligand>
</feature>
<feature type="modified residue" description="N6-acetyllysine" evidence="5">
    <location>
        <position position="38"/>
    </location>
</feature>
<feature type="modified residue" description="Phosphoserine" evidence="4">
    <location>
        <position position="57"/>
    </location>
</feature>
<feature type="modified residue" description="N6-acetyllysine" evidence="2">
    <location>
        <position position="59"/>
    </location>
</feature>
<feature type="modified residue" description="Phosphoserine" evidence="4">
    <location>
        <position position="129"/>
    </location>
</feature>
<reference key="1">
    <citation type="journal article" date="2005" name="Science">
        <title>The transcriptional landscape of the mammalian genome.</title>
        <authorList>
            <person name="Carninci P."/>
            <person name="Kasukawa T."/>
            <person name="Katayama S."/>
            <person name="Gough J."/>
            <person name="Frith M.C."/>
            <person name="Maeda N."/>
            <person name="Oyama R."/>
            <person name="Ravasi T."/>
            <person name="Lenhard B."/>
            <person name="Wells C."/>
            <person name="Kodzius R."/>
            <person name="Shimokawa K."/>
            <person name="Bajic V.B."/>
            <person name="Brenner S.E."/>
            <person name="Batalov S."/>
            <person name="Forrest A.R."/>
            <person name="Zavolan M."/>
            <person name="Davis M.J."/>
            <person name="Wilming L.G."/>
            <person name="Aidinis V."/>
            <person name="Allen J.E."/>
            <person name="Ambesi-Impiombato A."/>
            <person name="Apweiler R."/>
            <person name="Aturaliya R.N."/>
            <person name="Bailey T.L."/>
            <person name="Bansal M."/>
            <person name="Baxter L."/>
            <person name="Beisel K.W."/>
            <person name="Bersano T."/>
            <person name="Bono H."/>
            <person name="Chalk A.M."/>
            <person name="Chiu K.P."/>
            <person name="Choudhary V."/>
            <person name="Christoffels A."/>
            <person name="Clutterbuck D.R."/>
            <person name="Crowe M.L."/>
            <person name="Dalla E."/>
            <person name="Dalrymple B.P."/>
            <person name="de Bono B."/>
            <person name="Della Gatta G."/>
            <person name="di Bernardo D."/>
            <person name="Down T."/>
            <person name="Engstrom P."/>
            <person name="Fagiolini M."/>
            <person name="Faulkner G."/>
            <person name="Fletcher C.F."/>
            <person name="Fukushima T."/>
            <person name="Furuno M."/>
            <person name="Futaki S."/>
            <person name="Gariboldi M."/>
            <person name="Georgii-Hemming P."/>
            <person name="Gingeras T.R."/>
            <person name="Gojobori T."/>
            <person name="Green R.E."/>
            <person name="Gustincich S."/>
            <person name="Harbers M."/>
            <person name="Hayashi Y."/>
            <person name="Hensch T.K."/>
            <person name="Hirokawa N."/>
            <person name="Hill D."/>
            <person name="Huminiecki L."/>
            <person name="Iacono M."/>
            <person name="Ikeo K."/>
            <person name="Iwama A."/>
            <person name="Ishikawa T."/>
            <person name="Jakt M."/>
            <person name="Kanapin A."/>
            <person name="Katoh M."/>
            <person name="Kawasawa Y."/>
            <person name="Kelso J."/>
            <person name="Kitamura H."/>
            <person name="Kitano H."/>
            <person name="Kollias G."/>
            <person name="Krishnan S.P."/>
            <person name="Kruger A."/>
            <person name="Kummerfeld S.K."/>
            <person name="Kurochkin I.V."/>
            <person name="Lareau L.F."/>
            <person name="Lazarevic D."/>
            <person name="Lipovich L."/>
            <person name="Liu J."/>
            <person name="Liuni S."/>
            <person name="McWilliam S."/>
            <person name="Madan Babu M."/>
            <person name="Madera M."/>
            <person name="Marchionni L."/>
            <person name="Matsuda H."/>
            <person name="Matsuzawa S."/>
            <person name="Miki H."/>
            <person name="Mignone F."/>
            <person name="Miyake S."/>
            <person name="Morris K."/>
            <person name="Mottagui-Tabar S."/>
            <person name="Mulder N."/>
            <person name="Nakano N."/>
            <person name="Nakauchi H."/>
            <person name="Ng P."/>
            <person name="Nilsson R."/>
            <person name="Nishiguchi S."/>
            <person name="Nishikawa S."/>
            <person name="Nori F."/>
            <person name="Ohara O."/>
            <person name="Okazaki Y."/>
            <person name="Orlando V."/>
            <person name="Pang K.C."/>
            <person name="Pavan W.J."/>
            <person name="Pavesi G."/>
            <person name="Pesole G."/>
            <person name="Petrovsky N."/>
            <person name="Piazza S."/>
            <person name="Reed J."/>
            <person name="Reid J.F."/>
            <person name="Ring B.Z."/>
            <person name="Ringwald M."/>
            <person name="Rost B."/>
            <person name="Ruan Y."/>
            <person name="Salzberg S.L."/>
            <person name="Sandelin A."/>
            <person name="Schneider C."/>
            <person name="Schoenbach C."/>
            <person name="Sekiguchi K."/>
            <person name="Semple C.A."/>
            <person name="Seno S."/>
            <person name="Sessa L."/>
            <person name="Sheng Y."/>
            <person name="Shibata Y."/>
            <person name="Shimada H."/>
            <person name="Shimada K."/>
            <person name="Silva D."/>
            <person name="Sinclair B."/>
            <person name="Sperling S."/>
            <person name="Stupka E."/>
            <person name="Sugiura K."/>
            <person name="Sultana R."/>
            <person name="Takenaka Y."/>
            <person name="Taki K."/>
            <person name="Tammoja K."/>
            <person name="Tan S.L."/>
            <person name="Tang S."/>
            <person name="Taylor M.S."/>
            <person name="Tegner J."/>
            <person name="Teichmann S.A."/>
            <person name="Ueda H.R."/>
            <person name="van Nimwegen E."/>
            <person name="Verardo R."/>
            <person name="Wei C.L."/>
            <person name="Yagi K."/>
            <person name="Yamanishi H."/>
            <person name="Zabarovsky E."/>
            <person name="Zhu S."/>
            <person name="Zimmer A."/>
            <person name="Hide W."/>
            <person name="Bult C."/>
            <person name="Grimmond S.M."/>
            <person name="Teasdale R.D."/>
            <person name="Liu E.T."/>
            <person name="Brusic V."/>
            <person name="Quackenbush J."/>
            <person name="Wahlestedt C."/>
            <person name="Mattick J.S."/>
            <person name="Hume D.A."/>
            <person name="Kai C."/>
            <person name="Sasaki D."/>
            <person name="Tomaru Y."/>
            <person name="Fukuda S."/>
            <person name="Kanamori-Katayama M."/>
            <person name="Suzuki M."/>
            <person name="Aoki J."/>
            <person name="Arakawa T."/>
            <person name="Iida J."/>
            <person name="Imamura K."/>
            <person name="Itoh M."/>
            <person name="Kato T."/>
            <person name="Kawaji H."/>
            <person name="Kawagashira N."/>
            <person name="Kawashima T."/>
            <person name="Kojima M."/>
            <person name="Kondo S."/>
            <person name="Konno H."/>
            <person name="Nakano K."/>
            <person name="Ninomiya N."/>
            <person name="Nishio T."/>
            <person name="Okada M."/>
            <person name="Plessy C."/>
            <person name="Shibata K."/>
            <person name="Shiraki T."/>
            <person name="Suzuki S."/>
            <person name="Tagami M."/>
            <person name="Waki K."/>
            <person name="Watahiki A."/>
            <person name="Okamura-Oho Y."/>
            <person name="Suzuki H."/>
            <person name="Kawai J."/>
            <person name="Hayashizaki Y."/>
        </authorList>
    </citation>
    <scope>NUCLEOTIDE SEQUENCE [LARGE SCALE MRNA]</scope>
    <source>
        <strain>BALB/cJ</strain>
        <strain>C57BL/6J</strain>
        <tissue>Bone marrow</tissue>
        <tissue>Kidney</tissue>
    </source>
</reference>
<reference key="2">
    <citation type="journal article" date="2010" name="Cell">
        <title>A tissue-specific atlas of mouse protein phosphorylation and expression.</title>
        <authorList>
            <person name="Huttlin E.L."/>
            <person name="Jedrychowski M.P."/>
            <person name="Elias J.E."/>
            <person name="Goswami T."/>
            <person name="Rad R."/>
            <person name="Beausoleil S.A."/>
            <person name="Villen J."/>
            <person name="Haas W."/>
            <person name="Sowa M.E."/>
            <person name="Gygi S.P."/>
        </authorList>
    </citation>
    <scope>PHOSPHORYLATION [LARGE SCALE ANALYSIS] AT SER-57 AND SER-129</scope>
    <scope>IDENTIFICATION BY MASS SPECTROMETRY [LARGE SCALE ANALYSIS]</scope>
    <source>
        <tissue>Brain</tissue>
        <tissue>Brown adipose tissue</tissue>
        <tissue>Heart</tissue>
        <tissue>Kidney</tissue>
        <tissue>Liver</tissue>
        <tissue>Lung</tissue>
        <tissue>Pancreas</tissue>
        <tissue>Spleen</tissue>
        <tissue>Testis</tissue>
    </source>
</reference>
<reference key="3">
    <citation type="journal article" date="2013" name="Mol. Cell">
        <title>SIRT5-mediated lysine desuccinylation impacts diverse metabolic pathways.</title>
        <authorList>
            <person name="Park J."/>
            <person name="Chen Y."/>
            <person name="Tishkoff D.X."/>
            <person name="Peng C."/>
            <person name="Tan M."/>
            <person name="Dai L."/>
            <person name="Xie Z."/>
            <person name="Zhang Y."/>
            <person name="Zwaans B.M."/>
            <person name="Skinner M.E."/>
            <person name="Lombard D.B."/>
            <person name="Zhao Y."/>
        </authorList>
    </citation>
    <scope>ACETYLATION [LARGE SCALE ANALYSIS] AT LYS-38</scope>
    <scope>IDENTIFICATION BY MASS SPECTROMETRY [LARGE SCALE ANALYSIS]</scope>
    <source>
        <tissue>Embryonic fibroblast</tissue>
    </source>
</reference>
<comment type="function">
    <text evidence="1">Catalyzes the oxidative decarboxylation of 6-phosphogluconate to ribulose 5-phosphate and CO(2), with concomitant reduction of NADP to NADPH.</text>
</comment>
<comment type="catalytic activity">
    <reaction>
        <text>6-phospho-D-gluconate + NADP(+) = D-ribulose 5-phosphate + CO2 + NADPH</text>
        <dbReference type="Rhea" id="RHEA:10116"/>
        <dbReference type="ChEBI" id="CHEBI:16526"/>
        <dbReference type="ChEBI" id="CHEBI:57783"/>
        <dbReference type="ChEBI" id="CHEBI:58121"/>
        <dbReference type="ChEBI" id="CHEBI:58349"/>
        <dbReference type="ChEBI" id="CHEBI:58759"/>
        <dbReference type="EC" id="1.1.1.44"/>
    </reaction>
</comment>
<comment type="pathway">
    <text>Carbohydrate degradation; pentose phosphate pathway; D-ribulose 5-phosphate from D-glucose 6-phosphate (oxidative stage): step 3/3.</text>
</comment>
<comment type="subunit">
    <text evidence="1">Homodimer.</text>
</comment>
<comment type="subcellular location">
    <subcellularLocation>
        <location evidence="1">Cytoplasm</location>
    </subcellularLocation>
</comment>
<comment type="similarity">
    <text evidence="3">Belongs to the 6-phosphogluconate dehydrogenase family.</text>
</comment>
<accession>Q9DCD0</accession>
<accession>Q3UD80</accession>
<proteinExistence type="evidence at protein level"/>
<gene>
    <name type="primary">Pgd</name>
</gene>
<keyword id="KW-0007">Acetylation</keyword>
<keyword id="KW-0963">Cytoplasm</keyword>
<keyword id="KW-0311">Gluconate utilization</keyword>
<keyword id="KW-0521">NADP</keyword>
<keyword id="KW-0560">Oxidoreductase</keyword>
<keyword id="KW-0570">Pentose shunt</keyword>
<keyword id="KW-0597">Phosphoprotein</keyword>
<keyword id="KW-1185">Reference proteome</keyword>
<sequence length="483" mass="53247">MAQADIALIGLAVMGQNLILNMNDHGFVVCAFNRTVSKVDDFLANEAKGTKVVGAQSLKDMVSKLKKPRRVILLVKAGQAVDDFIEKLVPLLDTGDIIIDGGNSEYRDTTRRCRDLKAKGILFVGSGVSGGEEGARYGPSLMPGGNKEAWPHIKAIFQAIAAKVGTGEPCCDWVGDEGAGHFVKMVHNGIEYGDMQLICEAYHLMKDVLGMRHEEMAQAFEEWNKTELDSFLIEITANILKYRDTDGKELLPKIRDSAGQKGTGKWTAISALEYGMPVTLIGEAVFARCLSSLKEERVQASQKLKGPKVVQLEGSKKSFLEDIRKALYASKIISYAQGFMLLRQAATEFGWTLNYGGIALMWRGGCIIRSVFLGKIKDAFERNPELQNLLLDDFFKSAVDNCQDSWRRVISTGVQAGIPMPCFTTALSFYDGYRHEMLPANLIQAQRDYFGAHTYELLTKPGEFIHTNWTGHGGSVSSSSYNA</sequence>
<dbReference type="EC" id="1.1.1.44"/>
<dbReference type="EMBL" id="AK002894">
    <property type="protein sequence ID" value="BAB22439.1"/>
    <property type="molecule type" value="mRNA"/>
</dbReference>
<dbReference type="EMBL" id="AK145602">
    <property type="protein sequence ID" value="BAE26535.1"/>
    <property type="molecule type" value="mRNA"/>
</dbReference>
<dbReference type="EMBL" id="AK150210">
    <property type="protein sequence ID" value="BAE29381.1"/>
    <property type="molecule type" value="mRNA"/>
</dbReference>
<dbReference type="EMBL" id="AK153409">
    <property type="protein sequence ID" value="BAE31969.1"/>
    <property type="molecule type" value="mRNA"/>
</dbReference>
<dbReference type="EMBL" id="AK155027">
    <property type="protein sequence ID" value="BAE32999.1"/>
    <property type="molecule type" value="mRNA"/>
</dbReference>
<dbReference type="EMBL" id="AK166733">
    <property type="protein sequence ID" value="BAE38978.1"/>
    <property type="molecule type" value="mRNA"/>
</dbReference>
<dbReference type="EMBL" id="AK166947">
    <property type="protein sequence ID" value="BAE39134.1"/>
    <property type="molecule type" value="mRNA"/>
</dbReference>
<dbReference type="EMBL" id="AK167215">
    <property type="protein sequence ID" value="BAE39341.1"/>
    <property type="molecule type" value="mRNA"/>
</dbReference>
<dbReference type="EMBL" id="AK168251">
    <property type="protein sequence ID" value="BAE40201.1"/>
    <property type="molecule type" value="mRNA"/>
</dbReference>
<dbReference type="CCDS" id="CCDS38974.1"/>
<dbReference type="RefSeq" id="NP_001074743.1">
    <property type="nucleotide sequence ID" value="NM_001081274.2"/>
</dbReference>
<dbReference type="SMR" id="Q9DCD0"/>
<dbReference type="BioGRID" id="225388">
    <property type="interactions" value="17"/>
</dbReference>
<dbReference type="FunCoup" id="Q9DCD0">
    <property type="interactions" value="2645"/>
</dbReference>
<dbReference type="STRING" id="10090.ENSMUSP00000081141"/>
<dbReference type="GlyGen" id="Q9DCD0">
    <property type="glycosylation" value="1 site, 1 O-linked glycan (1 site)"/>
</dbReference>
<dbReference type="iPTMnet" id="Q9DCD0"/>
<dbReference type="MetOSite" id="Q9DCD0"/>
<dbReference type="PhosphoSitePlus" id="Q9DCD0"/>
<dbReference type="SwissPalm" id="Q9DCD0"/>
<dbReference type="jPOST" id="Q9DCD0"/>
<dbReference type="PaxDb" id="10090-ENSMUSP00000081141"/>
<dbReference type="ProteomicsDB" id="285737"/>
<dbReference type="Pumba" id="Q9DCD0"/>
<dbReference type="Antibodypedia" id="27894">
    <property type="antibodies" value="350 antibodies from 34 providers"/>
</dbReference>
<dbReference type="DNASU" id="110208"/>
<dbReference type="Ensembl" id="ENSMUST00000084124.7">
    <property type="protein sequence ID" value="ENSMUSP00000081141.7"/>
    <property type="gene ID" value="ENSMUSG00000028961.16"/>
</dbReference>
<dbReference type="GeneID" id="110208"/>
<dbReference type="KEGG" id="mmu:110208"/>
<dbReference type="UCSC" id="uc008vvv.1">
    <property type="organism name" value="mouse"/>
</dbReference>
<dbReference type="AGR" id="MGI:97553"/>
<dbReference type="CTD" id="5226"/>
<dbReference type="MGI" id="MGI:97553">
    <property type="gene designation" value="Pgd"/>
</dbReference>
<dbReference type="VEuPathDB" id="HostDB:ENSMUSG00000028961"/>
<dbReference type="eggNOG" id="KOG2653">
    <property type="taxonomic scope" value="Eukaryota"/>
</dbReference>
<dbReference type="GeneTree" id="ENSGT00390000009023"/>
<dbReference type="HOGENOM" id="CLU_024540_4_2_1"/>
<dbReference type="InParanoid" id="Q9DCD0"/>
<dbReference type="OMA" id="CVTHVGP"/>
<dbReference type="OrthoDB" id="434986at2759"/>
<dbReference type="PhylomeDB" id="Q9DCD0"/>
<dbReference type="TreeFam" id="TF300386"/>
<dbReference type="BRENDA" id="1.1.1.44">
    <property type="organism ID" value="3474"/>
</dbReference>
<dbReference type="Reactome" id="R-MMU-71336">
    <property type="pathway name" value="Pentose phosphate pathway"/>
</dbReference>
<dbReference type="UniPathway" id="UPA00115">
    <property type="reaction ID" value="UER00410"/>
</dbReference>
<dbReference type="BioGRID-ORCS" id="110208">
    <property type="hits" value="27 hits in 78 CRISPR screens"/>
</dbReference>
<dbReference type="ChiTaRS" id="Pgd">
    <property type="organism name" value="mouse"/>
</dbReference>
<dbReference type="PRO" id="PR:Q9DCD0"/>
<dbReference type="Proteomes" id="UP000000589">
    <property type="component" value="Chromosome 4"/>
</dbReference>
<dbReference type="RNAct" id="Q9DCD0">
    <property type="molecule type" value="protein"/>
</dbReference>
<dbReference type="Bgee" id="ENSMUSG00000028961">
    <property type="expression patterns" value="Expressed in aorta tunica adventitia and 258 other cell types or tissues"/>
</dbReference>
<dbReference type="GO" id="GO:0005829">
    <property type="term" value="C:cytosol"/>
    <property type="evidence" value="ECO:0000314"/>
    <property type="project" value="MGI"/>
</dbReference>
<dbReference type="GO" id="GO:0030246">
    <property type="term" value="F:carbohydrate binding"/>
    <property type="evidence" value="ECO:0007669"/>
    <property type="project" value="Ensembl"/>
</dbReference>
<dbReference type="GO" id="GO:0031406">
    <property type="term" value="F:carboxylic acid binding"/>
    <property type="evidence" value="ECO:0007669"/>
    <property type="project" value="Ensembl"/>
</dbReference>
<dbReference type="GO" id="GO:0050661">
    <property type="term" value="F:NADP binding"/>
    <property type="evidence" value="ECO:0007669"/>
    <property type="project" value="Ensembl"/>
</dbReference>
<dbReference type="GO" id="GO:0004616">
    <property type="term" value="F:phosphogluconate dehydrogenase (decarboxylating) activity"/>
    <property type="evidence" value="ECO:0000314"/>
    <property type="project" value="MGI"/>
</dbReference>
<dbReference type="GO" id="GO:0019521">
    <property type="term" value="P:D-gluconate metabolic process"/>
    <property type="evidence" value="ECO:0007669"/>
    <property type="project" value="UniProtKB-KW"/>
</dbReference>
<dbReference type="GO" id="GO:0006740">
    <property type="term" value="P:NADPH regeneration"/>
    <property type="evidence" value="ECO:0000314"/>
    <property type="project" value="MGI"/>
</dbReference>
<dbReference type="GO" id="GO:0019322">
    <property type="term" value="P:pentose biosynthetic process"/>
    <property type="evidence" value="ECO:0000314"/>
    <property type="project" value="MGI"/>
</dbReference>
<dbReference type="GO" id="GO:0006098">
    <property type="term" value="P:pentose-phosphate shunt"/>
    <property type="evidence" value="ECO:0000250"/>
    <property type="project" value="UniProtKB"/>
</dbReference>
<dbReference type="GO" id="GO:0009051">
    <property type="term" value="P:pentose-phosphate shunt, oxidative branch"/>
    <property type="evidence" value="ECO:0000314"/>
    <property type="project" value="MGI"/>
</dbReference>
<dbReference type="FunFam" id="1.10.1040.10:FF:000002">
    <property type="entry name" value="6-phosphogluconate dehydrogenase, decarboxylating"/>
    <property type="match status" value="1"/>
</dbReference>
<dbReference type="FunFam" id="1.20.5.320:FF:000002">
    <property type="entry name" value="6-phosphogluconate dehydrogenase, decarboxylating"/>
    <property type="match status" value="1"/>
</dbReference>
<dbReference type="FunFam" id="3.40.50.720:FF:000007">
    <property type="entry name" value="6-phosphogluconate dehydrogenase, decarboxylating"/>
    <property type="match status" value="1"/>
</dbReference>
<dbReference type="Gene3D" id="1.20.5.320">
    <property type="entry name" value="6-Phosphogluconate Dehydrogenase, domain 3"/>
    <property type="match status" value="1"/>
</dbReference>
<dbReference type="Gene3D" id="1.10.1040.10">
    <property type="entry name" value="N-(1-d-carboxylethyl)-l-norvaline Dehydrogenase, domain 2"/>
    <property type="match status" value="1"/>
</dbReference>
<dbReference type="Gene3D" id="3.40.50.720">
    <property type="entry name" value="NAD(P)-binding Rossmann-like Domain"/>
    <property type="match status" value="1"/>
</dbReference>
<dbReference type="InterPro" id="IPR008927">
    <property type="entry name" value="6-PGluconate_DH-like_C_sf"/>
</dbReference>
<dbReference type="InterPro" id="IPR013328">
    <property type="entry name" value="6PGD_dom2"/>
</dbReference>
<dbReference type="InterPro" id="IPR006114">
    <property type="entry name" value="6PGDH_C"/>
</dbReference>
<dbReference type="InterPro" id="IPR006113">
    <property type="entry name" value="6PGDH_Gnd/GntZ"/>
</dbReference>
<dbReference type="InterPro" id="IPR006115">
    <property type="entry name" value="6PGDH_NADP-bd"/>
</dbReference>
<dbReference type="InterPro" id="IPR006184">
    <property type="entry name" value="6PGdom_BS"/>
</dbReference>
<dbReference type="InterPro" id="IPR036291">
    <property type="entry name" value="NAD(P)-bd_dom_sf"/>
</dbReference>
<dbReference type="InterPro" id="IPR006183">
    <property type="entry name" value="Pgluconate_DH"/>
</dbReference>
<dbReference type="NCBIfam" id="TIGR00873">
    <property type="entry name" value="gnd"/>
    <property type="match status" value="1"/>
</dbReference>
<dbReference type="NCBIfam" id="NF006765">
    <property type="entry name" value="PRK09287.1"/>
    <property type="match status" value="1"/>
</dbReference>
<dbReference type="PANTHER" id="PTHR11811">
    <property type="entry name" value="6-PHOSPHOGLUCONATE DEHYDROGENASE"/>
    <property type="match status" value="1"/>
</dbReference>
<dbReference type="Pfam" id="PF00393">
    <property type="entry name" value="6PGD"/>
    <property type="match status" value="1"/>
</dbReference>
<dbReference type="Pfam" id="PF03446">
    <property type="entry name" value="NAD_binding_2"/>
    <property type="match status" value="1"/>
</dbReference>
<dbReference type="PIRSF" id="PIRSF000109">
    <property type="entry name" value="6PGD"/>
    <property type="match status" value="1"/>
</dbReference>
<dbReference type="PRINTS" id="PR00076">
    <property type="entry name" value="6PGDHDRGNASE"/>
</dbReference>
<dbReference type="SMART" id="SM01350">
    <property type="entry name" value="6PGD"/>
    <property type="match status" value="1"/>
</dbReference>
<dbReference type="SUPFAM" id="SSF48179">
    <property type="entry name" value="6-phosphogluconate dehydrogenase C-terminal domain-like"/>
    <property type="match status" value="1"/>
</dbReference>
<dbReference type="SUPFAM" id="SSF51735">
    <property type="entry name" value="NAD(P)-binding Rossmann-fold domains"/>
    <property type="match status" value="1"/>
</dbReference>
<dbReference type="PROSITE" id="PS00461">
    <property type="entry name" value="6PGD"/>
    <property type="match status" value="1"/>
</dbReference>